<dbReference type="EC" id="2.7.4.8" evidence="1"/>
<dbReference type="EMBL" id="AE016825">
    <property type="protein sequence ID" value="AAQ61432.1"/>
    <property type="molecule type" value="Genomic_DNA"/>
</dbReference>
<dbReference type="RefSeq" id="WP_011137317.1">
    <property type="nucleotide sequence ID" value="NC_005085.1"/>
</dbReference>
<dbReference type="SMR" id="Q7NRL1"/>
<dbReference type="STRING" id="243365.CV_3770"/>
<dbReference type="KEGG" id="cvi:CV_3770"/>
<dbReference type="eggNOG" id="COG0194">
    <property type="taxonomic scope" value="Bacteria"/>
</dbReference>
<dbReference type="HOGENOM" id="CLU_001715_1_0_4"/>
<dbReference type="OrthoDB" id="9808150at2"/>
<dbReference type="Proteomes" id="UP000001424">
    <property type="component" value="Chromosome"/>
</dbReference>
<dbReference type="GO" id="GO:0005829">
    <property type="term" value="C:cytosol"/>
    <property type="evidence" value="ECO:0007669"/>
    <property type="project" value="TreeGrafter"/>
</dbReference>
<dbReference type="GO" id="GO:0005524">
    <property type="term" value="F:ATP binding"/>
    <property type="evidence" value="ECO:0007669"/>
    <property type="project" value="UniProtKB-UniRule"/>
</dbReference>
<dbReference type="GO" id="GO:0004385">
    <property type="term" value="F:guanylate kinase activity"/>
    <property type="evidence" value="ECO:0007669"/>
    <property type="project" value="UniProtKB-UniRule"/>
</dbReference>
<dbReference type="CDD" id="cd00071">
    <property type="entry name" value="GMPK"/>
    <property type="match status" value="1"/>
</dbReference>
<dbReference type="FunFam" id="3.40.50.300:FF:000855">
    <property type="entry name" value="Guanylate kinase"/>
    <property type="match status" value="1"/>
</dbReference>
<dbReference type="FunFam" id="3.30.63.10:FF:000002">
    <property type="entry name" value="Guanylate kinase 1"/>
    <property type="match status" value="1"/>
</dbReference>
<dbReference type="Gene3D" id="3.30.63.10">
    <property type="entry name" value="Guanylate Kinase phosphate binding domain"/>
    <property type="match status" value="1"/>
</dbReference>
<dbReference type="Gene3D" id="3.40.50.300">
    <property type="entry name" value="P-loop containing nucleotide triphosphate hydrolases"/>
    <property type="match status" value="1"/>
</dbReference>
<dbReference type="HAMAP" id="MF_00328">
    <property type="entry name" value="Guanylate_kinase"/>
    <property type="match status" value="1"/>
</dbReference>
<dbReference type="InterPro" id="IPR008145">
    <property type="entry name" value="GK/Ca_channel_bsu"/>
</dbReference>
<dbReference type="InterPro" id="IPR008144">
    <property type="entry name" value="Guanylate_kin-like_dom"/>
</dbReference>
<dbReference type="InterPro" id="IPR017665">
    <property type="entry name" value="Guanylate_kinase"/>
</dbReference>
<dbReference type="InterPro" id="IPR020590">
    <property type="entry name" value="Guanylate_kinase_CS"/>
</dbReference>
<dbReference type="InterPro" id="IPR027417">
    <property type="entry name" value="P-loop_NTPase"/>
</dbReference>
<dbReference type="NCBIfam" id="TIGR03263">
    <property type="entry name" value="guanyl_kin"/>
    <property type="match status" value="1"/>
</dbReference>
<dbReference type="PANTHER" id="PTHR23117:SF13">
    <property type="entry name" value="GUANYLATE KINASE"/>
    <property type="match status" value="1"/>
</dbReference>
<dbReference type="PANTHER" id="PTHR23117">
    <property type="entry name" value="GUANYLATE KINASE-RELATED"/>
    <property type="match status" value="1"/>
</dbReference>
<dbReference type="Pfam" id="PF00625">
    <property type="entry name" value="Guanylate_kin"/>
    <property type="match status" value="1"/>
</dbReference>
<dbReference type="SMART" id="SM00072">
    <property type="entry name" value="GuKc"/>
    <property type="match status" value="1"/>
</dbReference>
<dbReference type="SUPFAM" id="SSF52540">
    <property type="entry name" value="P-loop containing nucleoside triphosphate hydrolases"/>
    <property type="match status" value="1"/>
</dbReference>
<dbReference type="PROSITE" id="PS00856">
    <property type="entry name" value="GUANYLATE_KINASE_1"/>
    <property type="match status" value="1"/>
</dbReference>
<dbReference type="PROSITE" id="PS50052">
    <property type="entry name" value="GUANYLATE_KINASE_2"/>
    <property type="match status" value="1"/>
</dbReference>
<protein>
    <recommendedName>
        <fullName evidence="1">Guanylate kinase</fullName>
        <ecNumber evidence="1">2.7.4.8</ecNumber>
    </recommendedName>
    <alternativeName>
        <fullName evidence="1">GMP kinase</fullName>
    </alternativeName>
</protein>
<feature type="chain" id="PRO_0000170523" description="Guanylate kinase">
    <location>
        <begin position="1"/>
        <end position="210"/>
    </location>
</feature>
<feature type="domain" description="Guanylate kinase-like" evidence="1">
    <location>
        <begin position="6"/>
        <end position="184"/>
    </location>
</feature>
<feature type="binding site" evidence="1">
    <location>
        <begin position="13"/>
        <end position="20"/>
    </location>
    <ligand>
        <name>ATP</name>
        <dbReference type="ChEBI" id="CHEBI:30616"/>
    </ligand>
</feature>
<comment type="function">
    <text evidence="1">Essential for recycling GMP and indirectly, cGMP.</text>
</comment>
<comment type="catalytic activity">
    <reaction evidence="1">
        <text>GMP + ATP = GDP + ADP</text>
        <dbReference type="Rhea" id="RHEA:20780"/>
        <dbReference type="ChEBI" id="CHEBI:30616"/>
        <dbReference type="ChEBI" id="CHEBI:58115"/>
        <dbReference type="ChEBI" id="CHEBI:58189"/>
        <dbReference type="ChEBI" id="CHEBI:456216"/>
        <dbReference type="EC" id="2.7.4.8"/>
    </reaction>
</comment>
<comment type="subcellular location">
    <subcellularLocation>
        <location evidence="1">Cytoplasm</location>
    </subcellularLocation>
</comment>
<comment type="similarity">
    <text evidence="1">Belongs to the guanylate kinase family.</text>
</comment>
<organism>
    <name type="scientific">Chromobacterium violaceum (strain ATCC 12472 / DSM 30191 / JCM 1249 / CCUG 213 / NBRC 12614 / NCIMB 9131 / NCTC 9757 / MK)</name>
    <dbReference type="NCBI Taxonomy" id="243365"/>
    <lineage>
        <taxon>Bacteria</taxon>
        <taxon>Pseudomonadati</taxon>
        <taxon>Pseudomonadota</taxon>
        <taxon>Betaproteobacteria</taxon>
        <taxon>Neisseriales</taxon>
        <taxon>Chromobacteriaceae</taxon>
        <taxon>Chromobacterium</taxon>
    </lineage>
</organism>
<gene>
    <name evidence="1" type="primary">gmk</name>
    <name type="ordered locus">CV_3770</name>
</gene>
<proteinExistence type="inferred from homology"/>
<accession>Q7NRL1</accession>
<keyword id="KW-0067">ATP-binding</keyword>
<keyword id="KW-0963">Cytoplasm</keyword>
<keyword id="KW-0418">Kinase</keyword>
<keyword id="KW-0547">Nucleotide-binding</keyword>
<keyword id="KW-1185">Reference proteome</keyword>
<keyword id="KW-0808">Transferase</keyword>
<sequence length="210" mass="23758">MNQPIGNIYIVVAPSGAGKTSLVAALLQAEPSVELSISYSTRQARKGEIDGQHYHFIDRAAFEEMKDRGDFLEWAEVYGNCYGTSAPWIRGRLEAGRDILLEIDWQGAEQVRKVFPDAIGIFIAPPSIEELERRLRGRDTDTEEVILRRLASARAEIDKIAEYDYIVVNDDFERARLDLISIVRAQRLRSAPQCRRLADMFRRMGTAGAK</sequence>
<reference key="1">
    <citation type="journal article" date="2003" name="Proc. Natl. Acad. Sci. U.S.A.">
        <title>The complete genome sequence of Chromobacterium violaceum reveals remarkable and exploitable bacterial adaptability.</title>
        <authorList>
            <person name="Vasconcelos A.T.R."/>
            <person name="de Almeida D.F."/>
            <person name="Hungria M."/>
            <person name="Guimaraes C.T."/>
            <person name="Antonio R.V."/>
            <person name="Almeida F.C."/>
            <person name="de Almeida L.G.P."/>
            <person name="de Almeida R."/>
            <person name="Alves-Gomes J.A."/>
            <person name="Andrade E.M."/>
            <person name="Araripe J."/>
            <person name="de Araujo M.F.F."/>
            <person name="Astolfi-Filho S."/>
            <person name="Azevedo V."/>
            <person name="Baptista A.J."/>
            <person name="Bataus L.A.M."/>
            <person name="Batista J.S."/>
            <person name="Belo A."/>
            <person name="van den Berg C."/>
            <person name="Bogo M."/>
            <person name="Bonatto S."/>
            <person name="Bordignon J."/>
            <person name="Brigido M.M."/>
            <person name="Brito C.A."/>
            <person name="Brocchi M."/>
            <person name="Burity H.A."/>
            <person name="Camargo A.A."/>
            <person name="Cardoso D.D.P."/>
            <person name="Carneiro N.P."/>
            <person name="Carraro D.M."/>
            <person name="Carvalho C.M.B."/>
            <person name="Cascardo J.C.M."/>
            <person name="Cavada B.S."/>
            <person name="Chueire L.M.O."/>
            <person name="Creczynski-Pasa T.B."/>
            <person name="Cunha-Junior N.C."/>
            <person name="Fagundes N."/>
            <person name="Falcao C.L."/>
            <person name="Fantinatti F."/>
            <person name="Farias I.P."/>
            <person name="Felipe M.S.S."/>
            <person name="Ferrari L.P."/>
            <person name="Ferro J.A."/>
            <person name="Ferro M.I.T."/>
            <person name="Franco G.R."/>
            <person name="Freitas N.S.A."/>
            <person name="Furlan L.R."/>
            <person name="Gazzinelli R.T."/>
            <person name="Gomes E.A."/>
            <person name="Goncalves P.R."/>
            <person name="Grangeiro T.B."/>
            <person name="Grattapaglia D."/>
            <person name="Grisard E.C."/>
            <person name="Hanna E.S."/>
            <person name="Jardim S.N."/>
            <person name="Laurino J."/>
            <person name="Leoi L.C.T."/>
            <person name="Lima L.F.A."/>
            <person name="Loureiro M.F."/>
            <person name="Lyra M.C.C.P."/>
            <person name="Madeira H.M.F."/>
            <person name="Manfio G.P."/>
            <person name="Maranhao A.Q."/>
            <person name="Martins W.S."/>
            <person name="di Mauro S.M.Z."/>
            <person name="de Medeiros S.R.B."/>
            <person name="Meissner R.V."/>
            <person name="Moreira M.A.M."/>
            <person name="Nascimento F.F."/>
            <person name="Nicolas M.F."/>
            <person name="Oliveira J.G."/>
            <person name="Oliveira S.C."/>
            <person name="Paixao R.F.C."/>
            <person name="Parente J.A."/>
            <person name="Pedrosa F.O."/>
            <person name="Pena S.D.J."/>
            <person name="Pereira J.O."/>
            <person name="Pereira M."/>
            <person name="Pinto L.S.R.C."/>
            <person name="Pinto L.S."/>
            <person name="Porto J.I.R."/>
            <person name="Potrich D.P."/>
            <person name="Ramalho-Neto C.E."/>
            <person name="Reis A.M.M."/>
            <person name="Rigo L.U."/>
            <person name="Rondinelli E."/>
            <person name="Santos E.B.P."/>
            <person name="Santos F.R."/>
            <person name="Schneider M.P.C."/>
            <person name="Seuanez H.N."/>
            <person name="Silva A.M.R."/>
            <person name="da Silva A.L.C."/>
            <person name="Silva D.W."/>
            <person name="Silva R."/>
            <person name="Simoes I.C."/>
            <person name="Simon D."/>
            <person name="Soares C.M.A."/>
            <person name="Soares R.B.A."/>
            <person name="Souza E.M."/>
            <person name="Souza K.R.L."/>
            <person name="Souza R.C."/>
            <person name="Steffens M.B.R."/>
            <person name="Steindel M."/>
            <person name="Teixeira S.R."/>
            <person name="Urmenyi T."/>
            <person name="Vettore A."/>
            <person name="Wassem R."/>
            <person name="Zaha A."/>
            <person name="Simpson A.J.G."/>
        </authorList>
    </citation>
    <scope>NUCLEOTIDE SEQUENCE [LARGE SCALE GENOMIC DNA]</scope>
    <source>
        <strain>ATCC 12472 / DSM 30191 / JCM 1249 / CCUG 213 / NBRC 12614 / NCIMB 9131 / NCTC 9757 / MK</strain>
    </source>
</reference>
<evidence type="ECO:0000255" key="1">
    <source>
        <dbReference type="HAMAP-Rule" id="MF_00328"/>
    </source>
</evidence>
<name>KGUA_CHRVO</name>